<evidence type="ECO:0000255" key="1">
    <source>
        <dbReference type="PROSITE-ProRule" id="PRU00118"/>
    </source>
</evidence>
<evidence type="ECO:0000256" key="2">
    <source>
        <dbReference type="SAM" id="MobiDB-lite"/>
    </source>
</evidence>
<evidence type="ECO:0000269" key="3">
    <source>
    </source>
</evidence>
<evidence type="ECO:0000303" key="4">
    <source>
    </source>
</evidence>
<evidence type="ECO:0000305" key="5"/>
<evidence type="ECO:0000305" key="6">
    <source>
    </source>
</evidence>
<evidence type="ECO:0007744" key="7">
    <source>
        <dbReference type="PDB" id="7PZY"/>
    </source>
</evidence>
<evidence type="ECO:0007744" key="8">
    <source>
        <dbReference type="PDB" id="7Q0F"/>
    </source>
</evidence>
<evidence type="ECO:0007744" key="9">
    <source>
        <dbReference type="PDB" id="7Q0P"/>
    </source>
</evidence>
<protein>
    <recommendedName>
        <fullName evidence="4">Small ribosomal subunit protein uS3</fullName>
    </recommendedName>
    <alternativeName>
        <fullName evidence="4">40S ribosomal protein S3</fullName>
    </alternativeName>
</protein>
<proteinExistence type="evidence at protein level"/>
<organism>
    <name type="scientific">Candida albicans (strain SC5314 / ATCC MYA-2876)</name>
    <name type="common">Yeast</name>
    <dbReference type="NCBI Taxonomy" id="237561"/>
    <lineage>
        <taxon>Eukaryota</taxon>
        <taxon>Fungi</taxon>
        <taxon>Dikarya</taxon>
        <taxon>Ascomycota</taxon>
        <taxon>Saccharomycotina</taxon>
        <taxon>Pichiomycetes</taxon>
        <taxon>Debaryomycetaceae</taxon>
        <taxon>Candida/Lodderomyces clade</taxon>
        <taxon>Candida</taxon>
    </lineage>
</organism>
<feature type="chain" id="PRO_0000456541" description="Small ribosomal subunit protein uS3">
    <location>
        <begin position="1"/>
        <end position="251"/>
    </location>
</feature>
<feature type="domain" description="KH type-2" evidence="1">
    <location>
        <begin position="22"/>
        <end position="93"/>
    </location>
</feature>
<feature type="region of interest" description="Disordered" evidence="2">
    <location>
        <begin position="223"/>
        <end position="251"/>
    </location>
</feature>
<feature type="compositionally biased region" description="Acidic residues" evidence="2">
    <location>
        <begin position="232"/>
        <end position="251"/>
    </location>
</feature>
<accession>A0A1D8PSV5</accession>
<sequence length="251" mass="27272">MVNAILSKKKKLVADGVFYAELNEFFTRELAEQGYAGVEVRKTPSKLEVIVKASNTQGVLGEQGRRIHELTSLIVKRFKLSPEGIAIYAERVEERGLSAAVQAEALKAKLLSGLPIRRAAYGVLRFAMGAGAKGVEVVISGKLRAARAKSQKYADGFMIHSGQPTRDFIDIAIRHVLMRQGVLGIKVKIMKDPAANRFGPRALPDAVKIAEAKDEDEVIPAPTVKSYKQTAEDETETDAPVEAEAEVEATA</sequence>
<name>RS3_CANAL</name>
<gene>
    <name type="primary">RPS3</name>
    <name type="ordered locus">CAALFM_CR04810WA</name>
    <name type="ordered locus">orf19.6312</name>
</gene>
<dbReference type="EMBL" id="CP017630">
    <property type="protein sequence ID" value="AOW31214.1"/>
    <property type="molecule type" value="Genomic_DNA"/>
</dbReference>
<dbReference type="RefSeq" id="XP_711097.2">
    <property type="nucleotide sequence ID" value="XM_706005.2"/>
</dbReference>
<dbReference type="PDB" id="7PZY">
    <property type="method" value="EM"/>
    <property type="resolution" value="2.32 A"/>
    <property type="chains" value="E=1-251"/>
</dbReference>
<dbReference type="PDB" id="7Q08">
    <property type="method" value="EM"/>
    <property type="resolution" value="2.56 A"/>
    <property type="chains" value="E=1-251"/>
</dbReference>
<dbReference type="PDB" id="7Q0F">
    <property type="method" value="EM"/>
    <property type="resolution" value="2.64 A"/>
    <property type="chains" value="E=1-251"/>
</dbReference>
<dbReference type="PDB" id="7Q0P">
    <property type="method" value="EM"/>
    <property type="resolution" value="2.77 A"/>
    <property type="chains" value="E=1-251"/>
</dbReference>
<dbReference type="PDB" id="7Q0R">
    <property type="method" value="EM"/>
    <property type="resolution" value="2.67 A"/>
    <property type="chains" value="E=1-251"/>
</dbReference>
<dbReference type="PDB" id="8C3A">
    <property type="method" value="X-ray"/>
    <property type="resolution" value="3.00 A"/>
    <property type="chains" value="CQ/F=1-251"/>
</dbReference>
<dbReference type="PDB" id="8OGJ">
    <property type="method" value="EM"/>
    <property type="resolution" value="3.10 A"/>
    <property type="chains" value="E=1-251"/>
</dbReference>
<dbReference type="PDB" id="8OH6">
    <property type="method" value="X-ray"/>
    <property type="resolution" value="3.35 A"/>
    <property type="chains" value="CQ/F=1-251"/>
</dbReference>
<dbReference type="PDB" id="8OI5">
    <property type="method" value="X-ray"/>
    <property type="resolution" value="2.90 A"/>
    <property type="chains" value="CQ/F=1-251"/>
</dbReference>
<dbReference type="PDB" id="8OJ3">
    <property type="method" value="X-ray"/>
    <property type="resolution" value="3.50 A"/>
    <property type="chains" value="CQ/F=1-251"/>
</dbReference>
<dbReference type="PDBsum" id="7PZY"/>
<dbReference type="PDBsum" id="7Q08"/>
<dbReference type="PDBsum" id="7Q0F"/>
<dbReference type="PDBsum" id="7Q0P"/>
<dbReference type="PDBsum" id="7Q0R"/>
<dbReference type="PDBsum" id="8C3A"/>
<dbReference type="PDBsum" id="8OGJ"/>
<dbReference type="PDBsum" id="8OH6"/>
<dbReference type="PDBsum" id="8OI5"/>
<dbReference type="PDBsum" id="8OJ3"/>
<dbReference type="EMDB" id="EMD-13737"/>
<dbReference type="EMDB" id="EMD-13741"/>
<dbReference type="EMDB" id="EMD-13744"/>
<dbReference type="EMDB" id="EMD-13749"/>
<dbReference type="EMDB" id="EMD-13750"/>
<dbReference type="SMR" id="A0A1D8PSV5"/>
<dbReference type="FunCoup" id="A0A1D8PSV5">
    <property type="interactions" value="1255"/>
</dbReference>
<dbReference type="STRING" id="237561.A0A1D8PSV5"/>
<dbReference type="EnsemblFungi" id="CR_04810W_A-T">
    <property type="protein sequence ID" value="CR_04810W_A-T-p1"/>
    <property type="gene ID" value="CR_04810W_A"/>
</dbReference>
<dbReference type="GeneID" id="3647299"/>
<dbReference type="KEGG" id="cal:CAALFM_CR04810WA"/>
<dbReference type="CGD" id="CAL0000200765">
    <property type="gene designation" value="RPS3"/>
</dbReference>
<dbReference type="VEuPathDB" id="FungiDB:CR_04810W_A"/>
<dbReference type="eggNOG" id="KOG3181">
    <property type="taxonomic scope" value="Eukaryota"/>
</dbReference>
<dbReference type="InParanoid" id="A0A1D8PSV5"/>
<dbReference type="OrthoDB" id="10248446at2759"/>
<dbReference type="Proteomes" id="UP000000559">
    <property type="component" value="Chromosome R"/>
</dbReference>
<dbReference type="GO" id="GO:0022627">
    <property type="term" value="C:cytosolic small ribosomal subunit"/>
    <property type="evidence" value="ECO:0000318"/>
    <property type="project" value="GO_Central"/>
</dbReference>
<dbReference type="GO" id="GO:0062040">
    <property type="term" value="C:fungal biofilm matrix"/>
    <property type="evidence" value="ECO:0000314"/>
    <property type="project" value="CGD"/>
</dbReference>
<dbReference type="GO" id="GO:0030446">
    <property type="term" value="C:hyphal cell wall"/>
    <property type="evidence" value="ECO:0000314"/>
    <property type="project" value="CGD"/>
</dbReference>
<dbReference type="GO" id="GO:0005634">
    <property type="term" value="C:nucleus"/>
    <property type="evidence" value="ECO:0000318"/>
    <property type="project" value="GO_Central"/>
</dbReference>
<dbReference type="GO" id="GO:0030688">
    <property type="term" value="C:preribosome, small subunit precursor"/>
    <property type="evidence" value="ECO:0007669"/>
    <property type="project" value="EnsemblFungi"/>
</dbReference>
<dbReference type="GO" id="GO:0003906">
    <property type="term" value="F:DNA-(apurinic or apyrimidinic site) endonuclease activity"/>
    <property type="evidence" value="ECO:0007669"/>
    <property type="project" value="EnsemblFungi"/>
</dbReference>
<dbReference type="GO" id="GO:0003723">
    <property type="term" value="F:RNA binding"/>
    <property type="evidence" value="ECO:0007669"/>
    <property type="project" value="UniProtKB-KW"/>
</dbReference>
<dbReference type="GO" id="GO:0003735">
    <property type="term" value="F:structural constituent of ribosome"/>
    <property type="evidence" value="ECO:0000318"/>
    <property type="project" value="GO_Central"/>
</dbReference>
<dbReference type="GO" id="GO:0002181">
    <property type="term" value="P:cytoplasmic translation"/>
    <property type="evidence" value="ECO:0007669"/>
    <property type="project" value="EnsemblFungi"/>
</dbReference>
<dbReference type="GO" id="GO:1990145">
    <property type="term" value="P:maintenance of translational fidelity"/>
    <property type="evidence" value="ECO:0007669"/>
    <property type="project" value="EnsemblFungi"/>
</dbReference>
<dbReference type="GO" id="GO:0070651">
    <property type="term" value="P:nonfunctional rRNA decay"/>
    <property type="evidence" value="ECO:0007669"/>
    <property type="project" value="EnsemblFungi"/>
</dbReference>
<dbReference type="GO" id="GO:0000056">
    <property type="term" value="P:ribosomal small subunit export from nucleus"/>
    <property type="evidence" value="ECO:0007669"/>
    <property type="project" value="EnsemblFungi"/>
</dbReference>
<dbReference type="CDD" id="cd02413">
    <property type="entry name" value="KH-II_40S_S3"/>
    <property type="match status" value="1"/>
</dbReference>
<dbReference type="FunFam" id="3.30.1140.32:FF:000013">
    <property type="entry name" value="40S ribosomal protein S3"/>
    <property type="match status" value="1"/>
</dbReference>
<dbReference type="FunFam" id="3.30.300.20:FF:000006">
    <property type="entry name" value="40S ribosomal protein S3"/>
    <property type="match status" value="1"/>
</dbReference>
<dbReference type="Gene3D" id="3.30.300.20">
    <property type="match status" value="1"/>
</dbReference>
<dbReference type="Gene3D" id="3.30.1140.32">
    <property type="entry name" value="Ribosomal protein S3, C-terminal domain"/>
    <property type="match status" value="1"/>
</dbReference>
<dbReference type="InterPro" id="IPR015946">
    <property type="entry name" value="KH_dom-like_a/b"/>
</dbReference>
<dbReference type="InterPro" id="IPR004044">
    <property type="entry name" value="KH_dom_type_2"/>
</dbReference>
<dbReference type="InterPro" id="IPR009019">
    <property type="entry name" value="KH_sf_prok-type"/>
</dbReference>
<dbReference type="InterPro" id="IPR036419">
    <property type="entry name" value="Ribosomal_S3_C_sf"/>
</dbReference>
<dbReference type="InterPro" id="IPR001351">
    <property type="entry name" value="Ribosomal_uS3_C"/>
</dbReference>
<dbReference type="InterPro" id="IPR005703">
    <property type="entry name" value="Ribosomal_uS3_euk/arc"/>
</dbReference>
<dbReference type="NCBIfam" id="NF003219">
    <property type="entry name" value="PRK04191.1"/>
    <property type="match status" value="1"/>
</dbReference>
<dbReference type="NCBIfam" id="TIGR01008">
    <property type="entry name" value="uS3_euk_arch"/>
    <property type="match status" value="1"/>
</dbReference>
<dbReference type="PANTHER" id="PTHR11760">
    <property type="entry name" value="30S/40S RIBOSOMAL PROTEIN S3"/>
    <property type="match status" value="1"/>
</dbReference>
<dbReference type="PANTHER" id="PTHR11760:SF32">
    <property type="entry name" value="SMALL RIBOSOMAL SUBUNIT PROTEIN US3"/>
    <property type="match status" value="1"/>
</dbReference>
<dbReference type="Pfam" id="PF07650">
    <property type="entry name" value="KH_2"/>
    <property type="match status" value="1"/>
</dbReference>
<dbReference type="Pfam" id="PF00189">
    <property type="entry name" value="Ribosomal_S3_C"/>
    <property type="match status" value="1"/>
</dbReference>
<dbReference type="SUPFAM" id="SSF54814">
    <property type="entry name" value="Prokaryotic type KH domain (KH-domain type II)"/>
    <property type="match status" value="1"/>
</dbReference>
<dbReference type="SUPFAM" id="SSF54821">
    <property type="entry name" value="Ribosomal protein S3 C-terminal domain"/>
    <property type="match status" value="1"/>
</dbReference>
<dbReference type="PROSITE" id="PS50823">
    <property type="entry name" value="KH_TYPE_2"/>
    <property type="match status" value="1"/>
</dbReference>
<reference key="1">
    <citation type="journal article" date="2004" name="Proc. Natl. Acad. Sci. U.S.A.">
        <title>The diploid genome sequence of Candida albicans.</title>
        <authorList>
            <person name="Jones T."/>
            <person name="Federspiel N.A."/>
            <person name="Chibana H."/>
            <person name="Dungan J."/>
            <person name="Kalman S."/>
            <person name="Magee B.B."/>
            <person name="Newport G."/>
            <person name="Thorstenson Y.R."/>
            <person name="Agabian N."/>
            <person name="Magee P.T."/>
            <person name="Davis R.W."/>
            <person name="Scherer S."/>
        </authorList>
    </citation>
    <scope>NUCLEOTIDE SEQUENCE [LARGE SCALE GENOMIC DNA]</scope>
    <source>
        <strain>SC5314 / ATCC MYA-2876</strain>
    </source>
</reference>
<reference key="2">
    <citation type="journal article" date="2007" name="Genome Biol.">
        <title>Assembly of the Candida albicans genome into sixteen supercontigs aligned on the eight chromosomes.</title>
        <authorList>
            <person name="van het Hoog M."/>
            <person name="Rast T.J."/>
            <person name="Martchenko M."/>
            <person name="Grindle S."/>
            <person name="Dignard D."/>
            <person name="Hogues H."/>
            <person name="Cuomo C."/>
            <person name="Berriman M."/>
            <person name="Scherer S."/>
            <person name="Magee B.B."/>
            <person name="Whiteway M."/>
            <person name="Chibana H."/>
            <person name="Nantel A."/>
            <person name="Magee P.T."/>
        </authorList>
    </citation>
    <scope>GENOME REANNOTATION</scope>
    <source>
        <strain>SC5314 / ATCC MYA-2876</strain>
    </source>
</reference>
<reference key="3">
    <citation type="journal article" date="2013" name="Genome Biol.">
        <title>Assembly of a phased diploid Candida albicans genome facilitates allele-specific measurements and provides a simple model for repeat and indel structure.</title>
        <authorList>
            <person name="Muzzey D."/>
            <person name="Schwartz K."/>
            <person name="Weissman J.S."/>
            <person name="Sherlock G."/>
        </authorList>
    </citation>
    <scope>NUCLEOTIDE SEQUENCE [LARGE SCALE GENOMIC DNA]</scope>
    <scope>GENOME REANNOTATION</scope>
    <source>
        <strain>SC5314 / ATCC MYA-2876</strain>
    </source>
</reference>
<reference evidence="7 8 9" key="4">
    <citation type="journal article" date="2022" name="Sci. Adv.">
        <title>E-site drug specificity of the human pathogen Candida albicans ribosome.</title>
        <authorList>
            <person name="Zgadzay Y."/>
            <person name="Kolosova O."/>
            <person name="Stetsenko A."/>
            <person name="Wu C."/>
            <person name="Bruchlen D."/>
            <person name="Usachev K."/>
            <person name="Validov S."/>
            <person name="Jenner L."/>
            <person name="Rogachev A."/>
            <person name="Yusupova G."/>
            <person name="Sachs M.S."/>
            <person name="Guskov A."/>
            <person name="Yusupov M."/>
        </authorList>
    </citation>
    <scope>STRUCTURE BY ELECTRON MICROSCOPY (2.32 ANGSTROMS) OF THE 80S RIBOSOME</scope>
    <scope>SUBUNIT</scope>
</reference>
<comment type="function">
    <text evidence="6">Component of the ribosome, a large ribonucleoprotein complex responsible for the synthesis of proteins in the cell. The small ribosomal subunit (SSU) binds messenger RNAs (mRNAs) and translates the encoded message by selecting cognate aminoacyl-transfer RNA (tRNA) molecules. The large subunit (LSU) contains the ribosomal catalytic site termed the peptidyl transferase center (PTC), which catalyzes the formation of peptide bonds, thereby polymerizing the amino acids delivered by tRNAs into a polypeptide chain. The nascent polypeptides leave the ribosome through a tunnel in the LSU and interact with protein factors that function in enzymatic processing, targeting, and the membrane insertion of nascent chains at the exit of the ribosomal tunnel.</text>
</comment>
<comment type="subunit">
    <text evidence="3">Component of the small ribosomal subunit (PubMed:35613268). Mature ribosomes consist of a small (40S) and a large (60S) subunit (PubMed:35613268). The 40S subunit contains about 32 different proteins and 1 molecule of RNA (18S) (PubMed:35613268). The 60S subunit contains 45 different proteins and 3 molecules of RNA (25S, 5.8S and 5S) (PubMed:35613268).</text>
</comment>
<comment type="subcellular location">
    <subcellularLocation>
        <location evidence="6">Cytoplasm</location>
    </subcellularLocation>
</comment>
<comment type="similarity">
    <text evidence="5">Belongs to the universal ribosomal protein uS3 family.</text>
</comment>
<keyword id="KW-0002">3D-structure</keyword>
<keyword id="KW-0963">Cytoplasm</keyword>
<keyword id="KW-1185">Reference proteome</keyword>
<keyword id="KW-0687">Ribonucleoprotein</keyword>
<keyword id="KW-0689">Ribosomal protein</keyword>
<keyword id="KW-0694">RNA-binding</keyword>